<reference key="1">
    <citation type="journal article" date="2003" name="Proc. Natl. Acad. Sci. U.S.A.">
        <title>The genome sequence of Blochmannia floridanus: comparative analysis of reduced genomes.</title>
        <authorList>
            <person name="Gil R."/>
            <person name="Silva F.J."/>
            <person name="Zientz E."/>
            <person name="Delmotte F."/>
            <person name="Gonzalez-Candelas F."/>
            <person name="Latorre A."/>
            <person name="Rausell C."/>
            <person name="Kamerbeek J."/>
            <person name="Gadau J."/>
            <person name="Hoelldobler B."/>
            <person name="van Ham R.C.H.J."/>
            <person name="Gross R."/>
            <person name="Moya A."/>
        </authorList>
    </citation>
    <scope>NUCLEOTIDE SEQUENCE [LARGE SCALE GENOMIC DNA]</scope>
</reference>
<feature type="chain" id="PRO_0000124908" description="Large ribosomal subunit protein uL5">
    <location>
        <begin position="1"/>
        <end position="190"/>
    </location>
</feature>
<dbReference type="EMBL" id="BX248583">
    <property type="protein sequence ID" value="CAD83718.1"/>
    <property type="molecule type" value="Genomic_DNA"/>
</dbReference>
<dbReference type="SMR" id="Q7VQD6"/>
<dbReference type="STRING" id="203907.Bfl203"/>
<dbReference type="KEGG" id="bfl:Bfl203"/>
<dbReference type="eggNOG" id="COG0094">
    <property type="taxonomic scope" value="Bacteria"/>
</dbReference>
<dbReference type="HOGENOM" id="CLU_061015_2_0_6"/>
<dbReference type="OrthoDB" id="9806626at2"/>
<dbReference type="Proteomes" id="UP000002192">
    <property type="component" value="Chromosome"/>
</dbReference>
<dbReference type="GO" id="GO:1990904">
    <property type="term" value="C:ribonucleoprotein complex"/>
    <property type="evidence" value="ECO:0007669"/>
    <property type="project" value="UniProtKB-KW"/>
</dbReference>
<dbReference type="GO" id="GO:0005840">
    <property type="term" value="C:ribosome"/>
    <property type="evidence" value="ECO:0007669"/>
    <property type="project" value="UniProtKB-KW"/>
</dbReference>
<dbReference type="GO" id="GO:0019843">
    <property type="term" value="F:rRNA binding"/>
    <property type="evidence" value="ECO:0007669"/>
    <property type="project" value="UniProtKB-UniRule"/>
</dbReference>
<dbReference type="GO" id="GO:0003735">
    <property type="term" value="F:structural constituent of ribosome"/>
    <property type="evidence" value="ECO:0007669"/>
    <property type="project" value="InterPro"/>
</dbReference>
<dbReference type="GO" id="GO:0000049">
    <property type="term" value="F:tRNA binding"/>
    <property type="evidence" value="ECO:0007669"/>
    <property type="project" value="UniProtKB-UniRule"/>
</dbReference>
<dbReference type="GO" id="GO:0006412">
    <property type="term" value="P:translation"/>
    <property type="evidence" value="ECO:0007669"/>
    <property type="project" value="UniProtKB-UniRule"/>
</dbReference>
<dbReference type="FunFam" id="3.30.1440.10:FF:000001">
    <property type="entry name" value="50S ribosomal protein L5"/>
    <property type="match status" value="1"/>
</dbReference>
<dbReference type="Gene3D" id="3.30.1440.10">
    <property type="match status" value="1"/>
</dbReference>
<dbReference type="HAMAP" id="MF_01333_B">
    <property type="entry name" value="Ribosomal_uL5_B"/>
    <property type="match status" value="1"/>
</dbReference>
<dbReference type="InterPro" id="IPR002132">
    <property type="entry name" value="Ribosomal_uL5"/>
</dbReference>
<dbReference type="InterPro" id="IPR020930">
    <property type="entry name" value="Ribosomal_uL5_bac-type"/>
</dbReference>
<dbReference type="InterPro" id="IPR031309">
    <property type="entry name" value="Ribosomal_uL5_C"/>
</dbReference>
<dbReference type="InterPro" id="IPR020929">
    <property type="entry name" value="Ribosomal_uL5_CS"/>
</dbReference>
<dbReference type="InterPro" id="IPR022803">
    <property type="entry name" value="Ribosomal_uL5_dom_sf"/>
</dbReference>
<dbReference type="InterPro" id="IPR031310">
    <property type="entry name" value="Ribosomal_uL5_N"/>
</dbReference>
<dbReference type="NCBIfam" id="NF000585">
    <property type="entry name" value="PRK00010.1"/>
    <property type="match status" value="1"/>
</dbReference>
<dbReference type="PANTHER" id="PTHR11994">
    <property type="entry name" value="60S RIBOSOMAL PROTEIN L11-RELATED"/>
    <property type="match status" value="1"/>
</dbReference>
<dbReference type="Pfam" id="PF00281">
    <property type="entry name" value="Ribosomal_L5"/>
    <property type="match status" value="1"/>
</dbReference>
<dbReference type="Pfam" id="PF00673">
    <property type="entry name" value="Ribosomal_L5_C"/>
    <property type="match status" value="1"/>
</dbReference>
<dbReference type="PIRSF" id="PIRSF002161">
    <property type="entry name" value="Ribosomal_L5"/>
    <property type="match status" value="1"/>
</dbReference>
<dbReference type="SUPFAM" id="SSF55282">
    <property type="entry name" value="RL5-like"/>
    <property type="match status" value="1"/>
</dbReference>
<dbReference type="PROSITE" id="PS00358">
    <property type="entry name" value="RIBOSOMAL_L5"/>
    <property type="match status" value="1"/>
</dbReference>
<organism>
    <name type="scientific">Blochmanniella floridana</name>
    <dbReference type="NCBI Taxonomy" id="203907"/>
    <lineage>
        <taxon>Bacteria</taxon>
        <taxon>Pseudomonadati</taxon>
        <taxon>Pseudomonadota</taxon>
        <taxon>Gammaproteobacteria</taxon>
        <taxon>Enterobacterales</taxon>
        <taxon>Enterobacteriaceae</taxon>
        <taxon>ant endosymbionts</taxon>
        <taxon>Candidatus Blochmanniella</taxon>
    </lineage>
</organism>
<sequence>MAKLRDYYKSHVVYDLMREFKYKSVMQVPKINKITISMGVGKSIINKKFLERAIEDLEMISGQKPVITKARKSIASFKIRQGQEIGCKVTLRRKRMWEFFERLISIAIPRIRDFRGLSIKSFDGYGNYTMGIREQIIFPEINYDTIDGIRGMNITITTNAVSDKEAYVLLRAFRFPLKNNDSIYTSTEEH</sequence>
<name>RL5_BLOFL</name>
<accession>Q7VQD6</accession>
<proteinExistence type="inferred from homology"/>
<evidence type="ECO:0000255" key="1">
    <source>
        <dbReference type="HAMAP-Rule" id="MF_01333"/>
    </source>
</evidence>
<evidence type="ECO:0000305" key="2"/>
<gene>
    <name evidence="1" type="primary">rplE</name>
    <name type="ordered locus">Bfl203</name>
</gene>
<keyword id="KW-1185">Reference proteome</keyword>
<keyword id="KW-0687">Ribonucleoprotein</keyword>
<keyword id="KW-0689">Ribosomal protein</keyword>
<keyword id="KW-0694">RNA-binding</keyword>
<keyword id="KW-0699">rRNA-binding</keyword>
<keyword id="KW-0820">tRNA-binding</keyword>
<comment type="function">
    <text evidence="1">This is one of the proteins that bind and probably mediate the attachment of the 5S RNA into the large ribosomal subunit, where it forms part of the central protuberance. In the 70S ribosome it contacts protein S13 of the 30S subunit (bridge B1b), connecting the 2 subunits; this bridge is implicated in subunit movement. Contacts the P site tRNA; the 5S rRNA and some of its associated proteins might help stabilize positioning of ribosome-bound tRNAs.</text>
</comment>
<comment type="subunit">
    <text evidence="1">Part of the 50S ribosomal subunit; part of the 5S rRNA/L5/L18/L25 subcomplex. Contacts the 5S rRNA and the P site tRNA. Forms a bridge to the 30S subunit in the 70S ribosome.</text>
</comment>
<comment type="similarity">
    <text evidence="1">Belongs to the universal ribosomal protein uL5 family.</text>
</comment>
<protein>
    <recommendedName>
        <fullName evidence="1">Large ribosomal subunit protein uL5</fullName>
    </recommendedName>
    <alternativeName>
        <fullName evidence="2">50S ribosomal protein L5</fullName>
    </alternativeName>
</protein>